<sequence>MVQRLWVSRLLRHRKAQLLLINLLTFGLEVCLAAGITYVPPLLLEVGVEEKFMTMVLGIGPVLGLVSVPLLGSASDHWRGRYGRRRPFIWALSLGILLSLFLIPRAGWLAGLLCPDPRPLELALLILGVGLLDFCGQVCFTPLEALLSDLFRDPDHCRQAYSVYAFMISLGGCLGYLLPAIDWDTSALAPYLGTQEECLFGLLTLIFLTCVAATLLVAEEAALGPAEPAEGLSAPSLPSHCCPCWARLAFRNLGALLPRLHQLCCRMPRTLRRLFVAELCSWMALMTFTLFYTDFVGEGLYQGVPRAELGTEARRHYDEGVRMGSLGLFLQCAISLVFSLVMDRLVQRFGTRAVYLASVAAFPVAAGATCLSHSVAVVTASAALTGFTFSALQILPYTLASLYHRERQVFLPKYRGDAGGTSSEDSLMTSFLPGPKPGAPFPNGHVGAGGSGLLPPPPALCGASACDVSVRVVVGEPTEARVVPGRGICLDLAILDSAFLLSQVAPSLFMGSIVQLSQSVTAYMVSAAGLGLVAIYFATQVVFDKSDLAKYSV</sequence>
<dbReference type="EMBL" id="AB060851">
    <property type="protein sequence ID" value="BAB46871.1"/>
    <property type="molecule type" value="mRNA"/>
</dbReference>
<dbReference type="EMBL" id="AB062977">
    <property type="protein sequence ID" value="BAB60745.1"/>
    <property type="status" value="ALT_INIT"/>
    <property type="molecule type" value="mRNA"/>
</dbReference>
<dbReference type="RefSeq" id="XP_005540658.2">
    <property type="nucleotide sequence ID" value="XM_005540601.4"/>
</dbReference>
<dbReference type="RefSeq" id="XP_005540661.2">
    <property type="nucleotide sequence ID" value="XM_005540604.4"/>
</dbReference>
<dbReference type="RefSeq" id="XP_045251792.1">
    <property type="nucleotide sequence ID" value="XM_045395857.2"/>
</dbReference>
<dbReference type="RefSeq" id="XP_065396752.1">
    <property type="nucleotide sequence ID" value="XM_065540680.1"/>
</dbReference>
<dbReference type="RefSeq" id="XP_065396755.1">
    <property type="nucleotide sequence ID" value="XM_065540683.1"/>
</dbReference>
<dbReference type="RefSeq" id="XP_065396762.1">
    <property type="nucleotide sequence ID" value="XM_065540690.1"/>
</dbReference>
<dbReference type="RefSeq" id="XP_065396772.1">
    <property type="nucleotide sequence ID" value="XM_065540700.1"/>
</dbReference>
<dbReference type="RefSeq" id="XP_065396781.1">
    <property type="nucleotide sequence ID" value="XM_065540709.1"/>
</dbReference>
<dbReference type="RefSeq" id="XP_065396787.1">
    <property type="nucleotide sequence ID" value="XM_065540715.1"/>
</dbReference>
<dbReference type="RefSeq" id="XP_065396796.1">
    <property type="nucleotide sequence ID" value="XM_065540724.1"/>
</dbReference>
<dbReference type="RefSeq" id="XP_065396801.1">
    <property type="nucleotide sequence ID" value="XM_065540729.1"/>
</dbReference>
<dbReference type="RefSeq" id="XP_065396806.1">
    <property type="nucleotide sequence ID" value="XM_065540734.1"/>
</dbReference>
<dbReference type="RefSeq" id="XP_065396817.1">
    <property type="nucleotide sequence ID" value="XM_065540745.1"/>
</dbReference>
<dbReference type="RefSeq" id="XP_065396819.1">
    <property type="nucleotide sequence ID" value="XM_065540747.1"/>
</dbReference>
<dbReference type="RefSeq" id="XP_065396823.1">
    <property type="nucleotide sequence ID" value="XM_065540751.1"/>
</dbReference>
<dbReference type="RefSeq" id="XP_065396828.1">
    <property type="nucleotide sequence ID" value="XM_065540756.1"/>
</dbReference>
<dbReference type="SMR" id="Q95KI5"/>
<dbReference type="STRING" id="9541.ENSMFAP00000039490"/>
<dbReference type="GeneID" id="102115659"/>
<dbReference type="KEGG" id="mcf:102115659"/>
<dbReference type="CTD" id="85414"/>
<dbReference type="eggNOG" id="KOG0637">
    <property type="taxonomic scope" value="Eukaryota"/>
</dbReference>
<dbReference type="Proteomes" id="UP000233100">
    <property type="component" value="Unplaced"/>
</dbReference>
<dbReference type="GO" id="GO:0016020">
    <property type="term" value="C:membrane"/>
    <property type="evidence" value="ECO:0007669"/>
    <property type="project" value="UniProtKB-SubCell"/>
</dbReference>
<dbReference type="GO" id="GO:0008506">
    <property type="term" value="F:sucrose:proton symporter activity"/>
    <property type="evidence" value="ECO:0000250"/>
    <property type="project" value="UniProtKB"/>
</dbReference>
<dbReference type="GO" id="GO:0015770">
    <property type="term" value="P:sucrose transport"/>
    <property type="evidence" value="ECO:0000250"/>
    <property type="project" value="UniProtKB"/>
</dbReference>
<dbReference type="CDD" id="cd17313">
    <property type="entry name" value="MFS_SLC45_SUC"/>
    <property type="match status" value="1"/>
</dbReference>
<dbReference type="FunFam" id="1.20.1250.20:FF:001230">
    <property type="entry name" value="Solute carrier family 45 member 3"/>
    <property type="match status" value="1"/>
</dbReference>
<dbReference type="Gene3D" id="1.20.1250.20">
    <property type="entry name" value="MFS general substrate transporter like domains"/>
    <property type="match status" value="2"/>
</dbReference>
<dbReference type="InterPro" id="IPR011701">
    <property type="entry name" value="MFS"/>
</dbReference>
<dbReference type="InterPro" id="IPR036259">
    <property type="entry name" value="MFS_trans_sf"/>
</dbReference>
<dbReference type="PANTHER" id="PTHR19432:SF37">
    <property type="entry name" value="SOLUTE CARRIER FAMILY 45 MEMBER 3"/>
    <property type="match status" value="1"/>
</dbReference>
<dbReference type="PANTHER" id="PTHR19432">
    <property type="entry name" value="SUGAR TRANSPORTER"/>
    <property type="match status" value="1"/>
</dbReference>
<dbReference type="Pfam" id="PF07690">
    <property type="entry name" value="MFS_1"/>
    <property type="match status" value="1"/>
</dbReference>
<dbReference type="SUPFAM" id="SSF103473">
    <property type="entry name" value="MFS general substrate transporter"/>
    <property type="match status" value="1"/>
</dbReference>
<reference key="1">
    <citation type="submission" date="2001-04" db="EMBL/GenBank/DDBJ databases">
        <title>Isolation of full-length cDNA clones from macaque brain cDNA libraries.</title>
        <authorList>
            <person name="Osada N."/>
            <person name="Hida M."/>
            <person name="Kusuda J."/>
            <person name="Tanuma R."/>
            <person name="Iseki K."/>
            <person name="Hirai M."/>
            <person name="Terao K."/>
            <person name="Suzuki Y."/>
            <person name="Sugano S."/>
            <person name="Hashimoto K."/>
        </authorList>
    </citation>
    <scope>NUCLEOTIDE SEQUENCE [LARGE SCALE MRNA]</scope>
    <source>
        <tissue>Medulla oblongata</tissue>
        <tissue>Temporal cortex</tissue>
    </source>
</reference>
<feature type="chain" id="PRO_0000122520" description="Solute carrier family 45 member 3">
    <location>
        <begin position="1"/>
        <end position="553"/>
    </location>
</feature>
<feature type="transmembrane region" description="Helical; Name=1" evidence="2">
    <location>
        <begin position="19"/>
        <end position="39"/>
    </location>
</feature>
<feature type="transmembrane region" description="Helical; Name=2" evidence="2">
    <location>
        <begin position="52"/>
        <end position="72"/>
    </location>
</feature>
<feature type="transmembrane region" description="Helical; Name=3" evidence="2">
    <location>
        <begin position="88"/>
        <end position="108"/>
    </location>
</feature>
<feature type="transmembrane region" description="Helical; Name=4" evidence="2">
    <location>
        <begin position="120"/>
        <end position="140"/>
    </location>
</feature>
<feature type="transmembrane region" description="Helical; Name=5" evidence="2">
    <location>
        <begin position="161"/>
        <end position="181"/>
    </location>
</feature>
<feature type="transmembrane region" description="Helical; Name=6" evidence="2">
    <location>
        <begin position="198"/>
        <end position="218"/>
    </location>
</feature>
<feature type="transmembrane region" description="Helical; Name=7" evidence="2">
    <location>
        <begin position="275"/>
        <end position="295"/>
    </location>
</feature>
<feature type="transmembrane region" description="Helical; Name=8" evidence="2">
    <location>
        <begin position="323"/>
        <end position="343"/>
    </location>
</feature>
<feature type="transmembrane region" description="Helical; Name=9" evidence="2">
    <location>
        <begin position="353"/>
        <end position="373"/>
    </location>
</feature>
<feature type="transmembrane region" description="Helical; Name=10" evidence="2">
    <location>
        <begin position="382"/>
        <end position="402"/>
    </location>
</feature>
<feature type="transmembrane region" description="Helical; Name=11" evidence="2">
    <location>
        <begin position="522"/>
        <end position="542"/>
    </location>
</feature>
<feature type="sequence conflict" description="In Ref. 1; BAB60745." evidence="3" ref="1">
    <original>A</original>
    <variation>T</variation>
    <location>
        <position position="165"/>
    </location>
</feature>
<feature type="sequence conflict" description="In Ref. 1; BAB60745." evidence="3" ref="1">
    <original>M</original>
    <variation>V</variation>
    <location>
        <position position="342"/>
    </location>
</feature>
<organism>
    <name type="scientific">Macaca fascicularis</name>
    <name type="common">Crab-eating macaque</name>
    <name type="synonym">Cynomolgus monkey</name>
    <dbReference type="NCBI Taxonomy" id="9541"/>
    <lineage>
        <taxon>Eukaryota</taxon>
        <taxon>Metazoa</taxon>
        <taxon>Chordata</taxon>
        <taxon>Craniata</taxon>
        <taxon>Vertebrata</taxon>
        <taxon>Euteleostomi</taxon>
        <taxon>Mammalia</taxon>
        <taxon>Eutheria</taxon>
        <taxon>Euarchontoglires</taxon>
        <taxon>Primates</taxon>
        <taxon>Haplorrhini</taxon>
        <taxon>Catarrhini</taxon>
        <taxon>Cercopithecidae</taxon>
        <taxon>Cercopithecinae</taxon>
        <taxon>Macaca</taxon>
    </lineage>
</organism>
<keyword id="KW-0472">Membrane</keyword>
<keyword id="KW-1185">Reference proteome</keyword>
<keyword id="KW-0769">Symport</keyword>
<keyword id="KW-0812">Transmembrane</keyword>
<keyword id="KW-1133">Transmembrane helix</keyword>
<keyword id="KW-0813">Transport</keyword>
<proteinExistence type="evidence at transcript level"/>
<name>S45A3_MACFA</name>
<protein>
    <recommendedName>
        <fullName>Solute carrier family 45 member 3</fullName>
    </recommendedName>
    <alternativeName>
        <fullName>Prostate cancer-associated protein 6</fullName>
    </alternativeName>
    <alternativeName>
        <fullName>Prostein</fullName>
    </alternativeName>
</protein>
<evidence type="ECO:0000250" key="1">
    <source>
        <dbReference type="UniProtKB" id="Q8K0H7"/>
    </source>
</evidence>
<evidence type="ECO:0000255" key="2"/>
<evidence type="ECO:0000305" key="3"/>
<gene>
    <name type="primary">SLC45A3</name>
    <name type="synonym">PCANAP6</name>
    <name type="synonym">PRST</name>
    <name type="ORF">QmoA-10594</name>
    <name type="ORF">QtrA-11310</name>
</gene>
<comment type="function">
    <text evidence="1">Proton-associated sucrose transporter. May be able to transport also glucose and fructose.</text>
</comment>
<comment type="catalytic activity">
    <reaction evidence="1">
        <text>sucrose(out) + H(+)(out) = sucrose(in) + H(+)(in)</text>
        <dbReference type="Rhea" id="RHEA:72187"/>
        <dbReference type="ChEBI" id="CHEBI:15378"/>
        <dbReference type="ChEBI" id="CHEBI:17992"/>
    </reaction>
</comment>
<comment type="subcellular location">
    <subcellularLocation>
        <location evidence="3">Membrane</location>
        <topology evidence="3">Multi-pass membrane protein</topology>
    </subcellularLocation>
</comment>
<comment type="similarity">
    <text evidence="3">Belongs to the glycoside-pentoside-hexuronide (GPH) cation symporter transporter (TC 2.A.2) family.</text>
</comment>
<comment type="sequence caution" evidence="3">
    <conflict type="erroneous initiation">
        <sequence resource="EMBL-CDS" id="BAB60745"/>
    </conflict>
    <text>Truncated N-terminus.</text>
</comment>
<accession>Q95KI5</accession>
<accession>Q95KC5</accession>